<comment type="similarity">
    <text evidence="1">Belongs to the universal ribosomal protein uS9 family.</text>
</comment>
<sequence length="182" mass="19595">MSEPIQNENVESNVADAADIAAATAATEEFTNTIGDAISTSTEEETFEAAPAVLDGPIWTVGRRKRAIVRVRMVAGSGEITCNGRTLEDYFPNKLHQQLIKAPLVLLGREGQFDIHANLGGGGPTGQAGAFRLAIARALNAYNPAERPTLKKAGFLTRDARAVERKKAGLHKARRAPQYSKR</sequence>
<gene>
    <name evidence="1" type="primary">rpsI</name>
    <name type="ordered locus">CE0587</name>
</gene>
<reference key="1">
    <citation type="journal article" date="2003" name="Genome Res.">
        <title>Comparative complete genome sequence analysis of the amino acid replacements responsible for the thermostability of Corynebacterium efficiens.</title>
        <authorList>
            <person name="Nishio Y."/>
            <person name="Nakamura Y."/>
            <person name="Kawarabayasi Y."/>
            <person name="Usuda Y."/>
            <person name="Kimura E."/>
            <person name="Sugimoto S."/>
            <person name="Matsui K."/>
            <person name="Yamagishi A."/>
            <person name="Kikuchi H."/>
            <person name="Ikeo K."/>
            <person name="Gojobori T."/>
        </authorList>
    </citation>
    <scope>NUCLEOTIDE SEQUENCE [LARGE SCALE GENOMIC DNA]</scope>
    <source>
        <strain>DSM 44549 / YS-314 / AJ 12310 / JCM 11189 / NBRC 100395</strain>
    </source>
</reference>
<protein>
    <recommendedName>
        <fullName evidence="1">Small ribosomal subunit protein uS9</fullName>
    </recommendedName>
    <alternativeName>
        <fullName evidence="2">30S ribosomal protein S9</fullName>
    </alternativeName>
</protein>
<evidence type="ECO:0000255" key="1">
    <source>
        <dbReference type="HAMAP-Rule" id="MF_00532"/>
    </source>
</evidence>
<evidence type="ECO:0000305" key="2"/>
<proteinExistence type="inferred from homology"/>
<name>RS9_COREF</name>
<keyword id="KW-1185">Reference proteome</keyword>
<keyword id="KW-0687">Ribonucleoprotein</keyword>
<keyword id="KW-0689">Ribosomal protein</keyword>
<organism>
    <name type="scientific">Corynebacterium efficiens (strain DSM 44549 / YS-314 / AJ 12310 / JCM 11189 / NBRC 100395)</name>
    <dbReference type="NCBI Taxonomy" id="196164"/>
    <lineage>
        <taxon>Bacteria</taxon>
        <taxon>Bacillati</taxon>
        <taxon>Actinomycetota</taxon>
        <taxon>Actinomycetes</taxon>
        <taxon>Mycobacteriales</taxon>
        <taxon>Corynebacteriaceae</taxon>
        <taxon>Corynebacterium</taxon>
    </lineage>
</organism>
<accession>Q8FS19</accession>
<feature type="chain" id="PRO_0000111350" description="Small ribosomal subunit protein uS9">
    <location>
        <begin position="1"/>
        <end position="182"/>
    </location>
</feature>
<dbReference type="EMBL" id="BA000035">
    <property type="protein sequence ID" value="BAC17397.1"/>
    <property type="molecule type" value="Genomic_DNA"/>
</dbReference>
<dbReference type="RefSeq" id="WP_006769736.1">
    <property type="nucleotide sequence ID" value="NC_004369.1"/>
</dbReference>
<dbReference type="SMR" id="Q8FS19"/>
<dbReference type="STRING" id="196164.gene:10740989"/>
<dbReference type="KEGG" id="cef:CE0587"/>
<dbReference type="eggNOG" id="COG0103">
    <property type="taxonomic scope" value="Bacteria"/>
</dbReference>
<dbReference type="HOGENOM" id="CLU_046483_2_0_11"/>
<dbReference type="OrthoDB" id="9803965at2"/>
<dbReference type="Proteomes" id="UP000001409">
    <property type="component" value="Chromosome"/>
</dbReference>
<dbReference type="GO" id="GO:0005737">
    <property type="term" value="C:cytoplasm"/>
    <property type="evidence" value="ECO:0007669"/>
    <property type="project" value="UniProtKB-ARBA"/>
</dbReference>
<dbReference type="GO" id="GO:0015935">
    <property type="term" value="C:small ribosomal subunit"/>
    <property type="evidence" value="ECO:0007669"/>
    <property type="project" value="TreeGrafter"/>
</dbReference>
<dbReference type="GO" id="GO:0003723">
    <property type="term" value="F:RNA binding"/>
    <property type="evidence" value="ECO:0007669"/>
    <property type="project" value="TreeGrafter"/>
</dbReference>
<dbReference type="GO" id="GO:0003735">
    <property type="term" value="F:structural constituent of ribosome"/>
    <property type="evidence" value="ECO:0007669"/>
    <property type="project" value="InterPro"/>
</dbReference>
<dbReference type="GO" id="GO:0006412">
    <property type="term" value="P:translation"/>
    <property type="evidence" value="ECO:0007669"/>
    <property type="project" value="UniProtKB-UniRule"/>
</dbReference>
<dbReference type="FunFam" id="3.30.230.10:FF:000001">
    <property type="entry name" value="30S ribosomal protein S9"/>
    <property type="match status" value="1"/>
</dbReference>
<dbReference type="Gene3D" id="3.30.230.10">
    <property type="match status" value="1"/>
</dbReference>
<dbReference type="HAMAP" id="MF_00532_B">
    <property type="entry name" value="Ribosomal_uS9_B"/>
    <property type="match status" value="1"/>
</dbReference>
<dbReference type="InterPro" id="IPR020568">
    <property type="entry name" value="Ribosomal_Su5_D2-typ_SF"/>
</dbReference>
<dbReference type="InterPro" id="IPR000754">
    <property type="entry name" value="Ribosomal_uS9"/>
</dbReference>
<dbReference type="InterPro" id="IPR023035">
    <property type="entry name" value="Ribosomal_uS9_bac/plastid"/>
</dbReference>
<dbReference type="InterPro" id="IPR020574">
    <property type="entry name" value="Ribosomal_uS9_CS"/>
</dbReference>
<dbReference type="InterPro" id="IPR014721">
    <property type="entry name" value="Ribsml_uS5_D2-typ_fold_subgr"/>
</dbReference>
<dbReference type="NCBIfam" id="NF001099">
    <property type="entry name" value="PRK00132.1"/>
    <property type="match status" value="1"/>
</dbReference>
<dbReference type="PANTHER" id="PTHR21569">
    <property type="entry name" value="RIBOSOMAL PROTEIN S9"/>
    <property type="match status" value="1"/>
</dbReference>
<dbReference type="PANTHER" id="PTHR21569:SF1">
    <property type="entry name" value="SMALL RIBOSOMAL SUBUNIT PROTEIN US9M"/>
    <property type="match status" value="1"/>
</dbReference>
<dbReference type="Pfam" id="PF00380">
    <property type="entry name" value="Ribosomal_S9"/>
    <property type="match status" value="1"/>
</dbReference>
<dbReference type="SUPFAM" id="SSF54211">
    <property type="entry name" value="Ribosomal protein S5 domain 2-like"/>
    <property type="match status" value="1"/>
</dbReference>
<dbReference type="PROSITE" id="PS00360">
    <property type="entry name" value="RIBOSOMAL_S9"/>
    <property type="match status" value="1"/>
</dbReference>